<keyword id="KW-0175">Coiled coil</keyword>
<keyword id="KW-0217">Developmental protein</keyword>
<keyword id="KW-1015">Disulfide bond</keyword>
<keyword id="KW-0325">Glycoprotein</keyword>
<keyword id="KW-1185">Reference proteome</keyword>
<keyword id="KW-0964">Secreted</keyword>
<keyword id="KW-0732">Signal</keyword>
<name>OLF3B_DANRE</name>
<reference key="1">
    <citation type="submission" date="2006-08" db="EMBL/GenBank/DDBJ databases">
        <authorList>
            <consortium name="NIH - Zebrafish Gene Collection (ZGC) project"/>
        </authorList>
    </citation>
    <scope>NUCLEOTIDE SEQUENCE [LARGE SCALE MRNA]</scope>
    <source>
        <tissue>Olfactory epithelium</tissue>
    </source>
</reference>
<protein>
    <recommendedName>
        <fullName>Olfactomedin-like protein 3B</fullName>
    </recommendedName>
</protein>
<sequence length="394" mass="44922">MKATIFFLLLTVLAHSRSQYHYQGLMNYLENRMLAMEERIALWHEQNNRYNSDLKEFRQQAADLLEKLSKDHSKLRSDLEGAGARVDRVEREMDYIETKNPPKPCVKAADKMVEQDAVIKEKKKEEFFELSVCVNIISSLKAMKILKRLGSPKGLWTKDARSAKIYVFNGTSDNTLYEFSSMRELSSSSGVSKGKQITVPTAWNGTGHAVYDGFLYYISESSELQVVKYDLTNSSVADTAVLPMEERSPVYQLNPETLVDLVADEDGLWALYPAGDTINLAKMDSNSLDIEQMWDTACPRSNAEAAFIVCGTVYVVYNTKPPSRSRVQCVFDVNDMVSNGEAPLIYFPRRYGAHSSLKYNPEERQLYAWDDGYQILYKLELKKKLWAVMPPPEE</sequence>
<organism>
    <name type="scientific">Danio rerio</name>
    <name type="common">Zebrafish</name>
    <name type="synonym">Brachydanio rerio</name>
    <dbReference type="NCBI Taxonomy" id="7955"/>
    <lineage>
        <taxon>Eukaryota</taxon>
        <taxon>Metazoa</taxon>
        <taxon>Chordata</taxon>
        <taxon>Craniata</taxon>
        <taxon>Vertebrata</taxon>
        <taxon>Euteleostomi</taxon>
        <taxon>Actinopterygii</taxon>
        <taxon>Neopterygii</taxon>
        <taxon>Teleostei</taxon>
        <taxon>Ostariophysi</taxon>
        <taxon>Cypriniformes</taxon>
        <taxon>Danionidae</taxon>
        <taxon>Danioninae</taxon>
        <taxon>Danio</taxon>
    </lineage>
</organism>
<feature type="signal peptide" evidence="2">
    <location>
        <begin position="1"/>
        <end position="18"/>
    </location>
</feature>
<feature type="chain" id="PRO_0000361564" description="Olfactomedin-like protein 3B">
    <location>
        <begin position="19"/>
        <end position="394"/>
    </location>
</feature>
<feature type="domain" description="Olfactomedin-like" evidence="3">
    <location>
        <begin position="132"/>
        <end position="383"/>
    </location>
</feature>
<feature type="coiled-coil region" evidence="2">
    <location>
        <begin position="29"/>
        <end position="94"/>
    </location>
</feature>
<feature type="glycosylation site" description="N-linked (GlcNAc...) asparagine" evidence="2">
    <location>
        <position position="169"/>
    </location>
</feature>
<feature type="glycosylation site" description="N-linked (GlcNAc...) asparagine" evidence="2">
    <location>
        <position position="204"/>
    </location>
</feature>
<feature type="glycosylation site" description="N-linked (GlcNAc...) asparagine" evidence="2">
    <location>
        <position position="233"/>
    </location>
</feature>
<feature type="disulfide bond" evidence="3">
    <location>
        <begin position="133"/>
        <end position="310"/>
    </location>
</feature>
<dbReference type="EMBL" id="BC122413">
    <property type="protein sequence ID" value="AAI22414.1"/>
    <property type="molecule type" value="mRNA"/>
</dbReference>
<dbReference type="RefSeq" id="NP_001039322.1">
    <property type="nucleotide sequence ID" value="NM_001045857.1"/>
</dbReference>
<dbReference type="SMR" id="Q0P3W2"/>
<dbReference type="FunCoup" id="Q0P3W2">
    <property type="interactions" value="394"/>
</dbReference>
<dbReference type="STRING" id="7955.ENSDARP00000083130"/>
<dbReference type="GlyCosmos" id="Q0P3W2">
    <property type="glycosylation" value="3 sites, No reported glycans"/>
</dbReference>
<dbReference type="PaxDb" id="7955-ENSDARP00000083130"/>
<dbReference type="GeneID" id="568106"/>
<dbReference type="KEGG" id="dre:568106"/>
<dbReference type="AGR" id="ZFIN:ZDB-GENE-060825-31"/>
<dbReference type="CTD" id="568106"/>
<dbReference type="ZFIN" id="ZDB-GENE-060825-31">
    <property type="gene designation" value="olfml3a"/>
</dbReference>
<dbReference type="eggNOG" id="KOG3545">
    <property type="taxonomic scope" value="Eukaryota"/>
</dbReference>
<dbReference type="InParanoid" id="Q0P3W2"/>
<dbReference type="OrthoDB" id="8626508at2759"/>
<dbReference type="PhylomeDB" id="Q0P3W2"/>
<dbReference type="PRO" id="PR:Q0P3W2"/>
<dbReference type="Proteomes" id="UP000000437">
    <property type="component" value="Chromosome 23"/>
</dbReference>
<dbReference type="GO" id="GO:0005615">
    <property type="term" value="C:extracellular space"/>
    <property type="evidence" value="ECO:0000318"/>
    <property type="project" value="GO_Central"/>
</dbReference>
<dbReference type="GO" id="GO:0007165">
    <property type="term" value="P:signal transduction"/>
    <property type="evidence" value="ECO:0000318"/>
    <property type="project" value="GO_Central"/>
</dbReference>
<dbReference type="InterPro" id="IPR003112">
    <property type="entry name" value="Olfac-like_dom"/>
</dbReference>
<dbReference type="InterPro" id="IPR050605">
    <property type="entry name" value="Olfactomedin-like_domain"/>
</dbReference>
<dbReference type="PANTHER" id="PTHR23192:SF49">
    <property type="entry name" value="OLFACTOMEDIN-LIKE PROTEIN 3B"/>
    <property type="match status" value="1"/>
</dbReference>
<dbReference type="PANTHER" id="PTHR23192">
    <property type="entry name" value="OLFACTOMEDIN-RELATED"/>
    <property type="match status" value="1"/>
</dbReference>
<dbReference type="Pfam" id="PF02191">
    <property type="entry name" value="OLF"/>
    <property type="match status" value="1"/>
</dbReference>
<dbReference type="SMART" id="SM00284">
    <property type="entry name" value="OLF"/>
    <property type="match status" value="1"/>
</dbReference>
<dbReference type="PROSITE" id="PS51132">
    <property type="entry name" value="OLF"/>
    <property type="match status" value="1"/>
</dbReference>
<accession>Q0P3W2</accession>
<gene>
    <name type="primary">olfml3b</name>
    <name type="ORF">zgc:153761</name>
</gene>
<evidence type="ECO:0000250" key="1"/>
<evidence type="ECO:0000255" key="2"/>
<evidence type="ECO:0000255" key="3">
    <source>
        <dbReference type="PROSITE-ProRule" id="PRU00446"/>
    </source>
</evidence>
<evidence type="ECO:0000305" key="4"/>
<comment type="function">
    <text evidence="1">Secreted scaffold protein that plays an essential role in dorsoventral patterning during early development. Stabilizes axial formation by restricting chordin (CHRD) activity on the dorsal side. Acts by facilitating the association between the tolloid proteases and their substrate chordin (CHRD), leading to enhance chordin (CHRD) degradation (By similarity).</text>
</comment>
<comment type="subcellular location">
    <subcellularLocation>
        <location evidence="1">Secreted</location>
    </subcellularLocation>
</comment>
<comment type="similarity">
    <text evidence="4">Belongs to the OLFML3 family.</text>
</comment>
<proteinExistence type="evidence at transcript level"/>